<gene>
    <name evidence="1" type="primary">rplI</name>
    <name type="ordered locus">Pcryo_1030</name>
</gene>
<reference key="1">
    <citation type="submission" date="2006-03" db="EMBL/GenBank/DDBJ databases">
        <title>Complete sequence of chromosome of Psychrobacter cryohalolentis K5.</title>
        <authorList>
            <consortium name="US DOE Joint Genome Institute"/>
            <person name="Copeland A."/>
            <person name="Lucas S."/>
            <person name="Lapidus A."/>
            <person name="Barry K."/>
            <person name="Detter J.C."/>
            <person name="Glavina T."/>
            <person name="Hammon N."/>
            <person name="Israni S."/>
            <person name="Dalin E."/>
            <person name="Tice H."/>
            <person name="Pitluck S."/>
            <person name="Brettin T."/>
            <person name="Bruce D."/>
            <person name="Han C."/>
            <person name="Tapia R."/>
            <person name="Sims D.R."/>
            <person name="Gilna P."/>
            <person name="Schmutz J."/>
            <person name="Larimer F."/>
            <person name="Land M."/>
            <person name="Hauser L."/>
            <person name="Kyrpides N."/>
            <person name="Kim E."/>
            <person name="Richardson P."/>
        </authorList>
    </citation>
    <scope>NUCLEOTIDE SEQUENCE [LARGE SCALE GENOMIC DNA]</scope>
    <source>
        <strain>ATCC BAA-1226 / DSM 17306 / VKM B-2378 / K5</strain>
    </source>
</reference>
<evidence type="ECO:0000255" key="1">
    <source>
        <dbReference type="HAMAP-Rule" id="MF_00503"/>
    </source>
</evidence>
<evidence type="ECO:0000256" key="2">
    <source>
        <dbReference type="SAM" id="MobiDB-lite"/>
    </source>
</evidence>
<evidence type="ECO:0000305" key="3"/>
<name>RL9_PSYCK</name>
<protein>
    <recommendedName>
        <fullName evidence="1">Large ribosomal subunit protein bL9</fullName>
    </recommendedName>
    <alternativeName>
        <fullName evidence="3">50S ribosomal protein L9</fullName>
    </alternativeName>
</protein>
<keyword id="KW-0687">Ribonucleoprotein</keyword>
<keyword id="KW-0689">Ribosomal protein</keyword>
<keyword id="KW-0694">RNA-binding</keyword>
<keyword id="KW-0699">rRNA-binding</keyword>
<accession>Q1QBZ2</accession>
<sequence>MQIILLQRIVNLGKLGETVDVKPGYGRNFLIPLGKALPATKANIEKFEARRAELEAEEAKEVAVAQERADALTDVNVIMRAKSGDEGKLFGSIGTRDIAEALTNSGLEVDRAEIKLPEGTLRQIGEYNVDIQLHHDVTATILVTILSEDGDNEDLDEDNAADENEDYSEE</sequence>
<organism>
    <name type="scientific">Psychrobacter cryohalolentis (strain ATCC BAA-1226 / DSM 17306 / VKM B-2378 / K5)</name>
    <dbReference type="NCBI Taxonomy" id="335284"/>
    <lineage>
        <taxon>Bacteria</taxon>
        <taxon>Pseudomonadati</taxon>
        <taxon>Pseudomonadota</taxon>
        <taxon>Gammaproteobacteria</taxon>
        <taxon>Moraxellales</taxon>
        <taxon>Moraxellaceae</taxon>
        <taxon>Psychrobacter</taxon>
    </lineage>
</organism>
<proteinExistence type="inferred from homology"/>
<comment type="function">
    <text evidence="1">Binds to the 23S rRNA.</text>
</comment>
<comment type="similarity">
    <text evidence="1">Belongs to the bacterial ribosomal protein bL9 family.</text>
</comment>
<feature type="chain" id="PRO_0000258477" description="Large ribosomal subunit protein bL9">
    <location>
        <begin position="1"/>
        <end position="170"/>
    </location>
</feature>
<feature type="region of interest" description="Disordered" evidence="2">
    <location>
        <begin position="149"/>
        <end position="170"/>
    </location>
</feature>
<dbReference type="EMBL" id="CP000323">
    <property type="protein sequence ID" value="ABE74811.1"/>
    <property type="molecule type" value="Genomic_DNA"/>
</dbReference>
<dbReference type="RefSeq" id="WP_011513369.1">
    <property type="nucleotide sequence ID" value="NC_007969.1"/>
</dbReference>
<dbReference type="SMR" id="Q1QBZ2"/>
<dbReference type="STRING" id="335284.Pcryo_1030"/>
<dbReference type="KEGG" id="pcr:Pcryo_1030"/>
<dbReference type="eggNOG" id="COG0359">
    <property type="taxonomic scope" value="Bacteria"/>
</dbReference>
<dbReference type="HOGENOM" id="CLU_078938_4_1_6"/>
<dbReference type="Proteomes" id="UP000002425">
    <property type="component" value="Chromosome"/>
</dbReference>
<dbReference type="GO" id="GO:1990904">
    <property type="term" value="C:ribonucleoprotein complex"/>
    <property type="evidence" value="ECO:0007669"/>
    <property type="project" value="UniProtKB-KW"/>
</dbReference>
<dbReference type="GO" id="GO:0005840">
    <property type="term" value="C:ribosome"/>
    <property type="evidence" value="ECO:0007669"/>
    <property type="project" value="UniProtKB-KW"/>
</dbReference>
<dbReference type="GO" id="GO:0019843">
    <property type="term" value="F:rRNA binding"/>
    <property type="evidence" value="ECO:0007669"/>
    <property type="project" value="UniProtKB-UniRule"/>
</dbReference>
<dbReference type="GO" id="GO:0003735">
    <property type="term" value="F:structural constituent of ribosome"/>
    <property type="evidence" value="ECO:0007669"/>
    <property type="project" value="InterPro"/>
</dbReference>
<dbReference type="GO" id="GO:0006412">
    <property type="term" value="P:translation"/>
    <property type="evidence" value="ECO:0007669"/>
    <property type="project" value="UniProtKB-UniRule"/>
</dbReference>
<dbReference type="Gene3D" id="3.10.430.100">
    <property type="entry name" value="Ribosomal protein L9, C-terminal domain"/>
    <property type="match status" value="1"/>
</dbReference>
<dbReference type="Gene3D" id="3.40.5.10">
    <property type="entry name" value="Ribosomal protein L9, N-terminal domain"/>
    <property type="match status" value="1"/>
</dbReference>
<dbReference type="HAMAP" id="MF_00503">
    <property type="entry name" value="Ribosomal_bL9"/>
    <property type="match status" value="1"/>
</dbReference>
<dbReference type="InterPro" id="IPR000244">
    <property type="entry name" value="Ribosomal_bL9"/>
</dbReference>
<dbReference type="InterPro" id="IPR009027">
    <property type="entry name" value="Ribosomal_bL9/RNase_H1_N"/>
</dbReference>
<dbReference type="InterPro" id="IPR020594">
    <property type="entry name" value="Ribosomal_bL9_bac/chp"/>
</dbReference>
<dbReference type="InterPro" id="IPR020069">
    <property type="entry name" value="Ribosomal_bL9_C"/>
</dbReference>
<dbReference type="InterPro" id="IPR036791">
    <property type="entry name" value="Ribosomal_bL9_C_sf"/>
</dbReference>
<dbReference type="InterPro" id="IPR020070">
    <property type="entry name" value="Ribosomal_bL9_N"/>
</dbReference>
<dbReference type="InterPro" id="IPR036935">
    <property type="entry name" value="Ribosomal_bL9_N_sf"/>
</dbReference>
<dbReference type="NCBIfam" id="TIGR00158">
    <property type="entry name" value="L9"/>
    <property type="match status" value="1"/>
</dbReference>
<dbReference type="PANTHER" id="PTHR21368">
    <property type="entry name" value="50S RIBOSOMAL PROTEIN L9"/>
    <property type="match status" value="1"/>
</dbReference>
<dbReference type="Pfam" id="PF03948">
    <property type="entry name" value="Ribosomal_L9_C"/>
    <property type="match status" value="1"/>
</dbReference>
<dbReference type="Pfam" id="PF01281">
    <property type="entry name" value="Ribosomal_L9_N"/>
    <property type="match status" value="1"/>
</dbReference>
<dbReference type="SUPFAM" id="SSF55658">
    <property type="entry name" value="L9 N-domain-like"/>
    <property type="match status" value="1"/>
</dbReference>
<dbReference type="SUPFAM" id="SSF55653">
    <property type="entry name" value="Ribosomal protein L9 C-domain"/>
    <property type="match status" value="1"/>
</dbReference>
<dbReference type="PROSITE" id="PS00651">
    <property type="entry name" value="RIBOSOMAL_L9"/>
    <property type="match status" value="1"/>
</dbReference>